<protein>
    <recommendedName>
        <fullName evidence="1">Fluoride-specific ion channel FluC</fullName>
    </recommendedName>
</protein>
<dbReference type="EMBL" id="CP001020">
    <property type="protein sequence ID" value="ACJ20072.1"/>
    <property type="molecule type" value="Genomic_DNA"/>
</dbReference>
<dbReference type="RefSeq" id="WP_005768609.1">
    <property type="nucleotide sequence ID" value="NC_011528.1"/>
</dbReference>
<dbReference type="SMR" id="B6J723"/>
<dbReference type="KEGG" id="cbc:CbuK_0833"/>
<dbReference type="HOGENOM" id="CLU_114342_3_0_6"/>
<dbReference type="GO" id="GO:0005886">
    <property type="term" value="C:plasma membrane"/>
    <property type="evidence" value="ECO:0007669"/>
    <property type="project" value="UniProtKB-SubCell"/>
</dbReference>
<dbReference type="GO" id="GO:0062054">
    <property type="term" value="F:fluoride channel activity"/>
    <property type="evidence" value="ECO:0007669"/>
    <property type="project" value="UniProtKB-UniRule"/>
</dbReference>
<dbReference type="GO" id="GO:0046872">
    <property type="term" value="F:metal ion binding"/>
    <property type="evidence" value="ECO:0007669"/>
    <property type="project" value="UniProtKB-KW"/>
</dbReference>
<dbReference type="GO" id="GO:0140114">
    <property type="term" value="P:cellular detoxification of fluoride"/>
    <property type="evidence" value="ECO:0007669"/>
    <property type="project" value="UniProtKB-UniRule"/>
</dbReference>
<dbReference type="HAMAP" id="MF_00454">
    <property type="entry name" value="FluC"/>
    <property type="match status" value="1"/>
</dbReference>
<dbReference type="InterPro" id="IPR003691">
    <property type="entry name" value="FluC"/>
</dbReference>
<dbReference type="NCBIfam" id="TIGR00494">
    <property type="entry name" value="crcB"/>
    <property type="match status" value="1"/>
</dbReference>
<dbReference type="PANTHER" id="PTHR28259">
    <property type="entry name" value="FLUORIDE EXPORT PROTEIN 1-RELATED"/>
    <property type="match status" value="1"/>
</dbReference>
<dbReference type="PANTHER" id="PTHR28259:SF1">
    <property type="entry name" value="FLUORIDE EXPORT PROTEIN 1-RELATED"/>
    <property type="match status" value="1"/>
</dbReference>
<dbReference type="Pfam" id="PF02537">
    <property type="entry name" value="CRCB"/>
    <property type="match status" value="1"/>
</dbReference>
<organism>
    <name type="scientific">Coxiella burnetii (strain CbuK_Q154)</name>
    <name type="common">Coxiella burnetii (strain Q154)</name>
    <dbReference type="NCBI Taxonomy" id="434924"/>
    <lineage>
        <taxon>Bacteria</taxon>
        <taxon>Pseudomonadati</taxon>
        <taxon>Pseudomonadota</taxon>
        <taxon>Gammaproteobacteria</taxon>
        <taxon>Legionellales</taxon>
        <taxon>Coxiellaceae</taxon>
        <taxon>Coxiella</taxon>
    </lineage>
</organism>
<proteinExistence type="inferred from homology"/>
<accession>B6J723</accession>
<keyword id="KW-0997">Cell inner membrane</keyword>
<keyword id="KW-1003">Cell membrane</keyword>
<keyword id="KW-0407">Ion channel</keyword>
<keyword id="KW-0406">Ion transport</keyword>
<keyword id="KW-0472">Membrane</keyword>
<keyword id="KW-0479">Metal-binding</keyword>
<keyword id="KW-0915">Sodium</keyword>
<keyword id="KW-0812">Transmembrane</keyword>
<keyword id="KW-1133">Transmembrane helix</keyword>
<keyword id="KW-0813">Transport</keyword>
<feature type="chain" id="PRO_1000125118" description="Fluoride-specific ion channel FluC">
    <location>
        <begin position="1"/>
        <end position="124"/>
    </location>
</feature>
<feature type="transmembrane region" description="Helical" evidence="1">
    <location>
        <begin position="3"/>
        <end position="23"/>
    </location>
</feature>
<feature type="transmembrane region" description="Helical" evidence="1">
    <location>
        <begin position="34"/>
        <end position="54"/>
    </location>
</feature>
<feature type="transmembrane region" description="Helical" evidence="1">
    <location>
        <begin position="68"/>
        <end position="88"/>
    </location>
</feature>
<feature type="transmembrane region" description="Helical" evidence="1">
    <location>
        <begin position="100"/>
        <end position="120"/>
    </location>
</feature>
<feature type="binding site" evidence="1">
    <location>
        <position position="75"/>
    </location>
    <ligand>
        <name>Na(+)</name>
        <dbReference type="ChEBI" id="CHEBI:29101"/>
        <note>structural</note>
    </ligand>
</feature>
<feature type="binding site" evidence="1">
    <location>
        <position position="78"/>
    </location>
    <ligand>
        <name>Na(+)</name>
        <dbReference type="ChEBI" id="CHEBI:29101"/>
        <note>structural</note>
    </ligand>
</feature>
<evidence type="ECO:0000255" key="1">
    <source>
        <dbReference type="HAMAP-Rule" id="MF_00454"/>
    </source>
</evidence>
<gene>
    <name evidence="1" type="primary">fluC</name>
    <name evidence="1" type="synonym">crcB</name>
    <name type="ordered locus">CbuK_0833</name>
</gene>
<reference key="1">
    <citation type="journal article" date="2009" name="Infect. Immun.">
        <title>Comparative genomics reveal extensive transposon-mediated genomic plasticity and diversity among potential effector proteins within the genus Coxiella.</title>
        <authorList>
            <person name="Beare P.A."/>
            <person name="Unsworth N."/>
            <person name="Andoh M."/>
            <person name="Voth D.E."/>
            <person name="Omsland A."/>
            <person name="Gilk S.D."/>
            <person name="Williams K.P."/>
            <person name="Sobral B.W."/>
            <person name="Kupko J.J. III"/>
            <person name="Porcella S.F."/>
            <person name="Samuel J.E."/>
            <person name="Heinzen R.A."/>
        </authorList>
    </citation>
    <scope>NUCLEOTIDE SEQUENCE [LARGE SCALE GENOMIC DNA]</scope>
    <source>
        <strain>CbuK_Q154</strain>
    </source>
</reference>
<comment type="function">
    <text evidence="1">Fluoride-specific ion channel. Important for reducing fluoride concentration in the cell, thus reducing its toxicity.</text>
</comment>
<comment type="catalytic activity">
    <reaction evidence="1">
        <text>fluoride(in) = fluoride(out)</text>
        <dbReference type="Rhea" id="RHEA:76159"/>
        <dbReference type="ChEBI" id="CHEBI:17051"/>
    </reaction>
    <physiologicalReaction direction="left-to-right" evidence="1">
        <dbReference type="Rhea" id="RHEA:76160"/>
    </physiologicalReaction>
</comment>
<comment type="activity regulation">
    <text evidence="1">Na(+) is not transported, but it plays an essential structural role and its presence is essential for fluoride channel function.</text>
</comment>
<comment type="subcellular location">
    <subcellularLocation>
        <location evidence="1">Cell inner membrane</location>
        <topology evidence="1">Multi-pass membrane protein</topology>
    </subcellularLocation>
</comment>
<comment type="similarity">
    <text evidence="1">Belongs to the fluoride channel Fluc/FEX (TC 1.A.43) family.</text>
</comment>
<name>FLUC_COXB1</name>
<sequence length="124" mass="13376">MNVLLIFLGCGAGGVARYGVSNLMYLLMGKQFPIGTLIVNITGSLLMGILFIFILERLSGNIQLWRSLLLIGFLGGYTTFSSFSIETFNLIEAGHYFVAALNVLLSVALCIAGAWLGVLIGRQL</sequence>